<organism>
    <name type="scientific">Schizosaccharomyces pombe (strain 972 / ATCC 24843)</name>
    <name type="common">Fission yeast</name>
    <dbReference type="NCBI Taxonomy" id="284812"/>
    <lineage>
        <taxon>Eukaryota</taxon>
        <taxon>Fungi</taxon>
        <taxon>Dikarya</taxon>
        <taxon>Ascomycota</taxon>
        <taxon>Taphrinomycotina</taxon>
        <taxon>Schizosaccharomycetes</taxon>
        <taxon>Schizosaccharomycetales</taxon>
        <taxon>Schizosaccharomycetaceae</taxon>
        <taxon>Schizosaccharomyces</taxon>
    </lineage>
</organism>
<comment type="function">
    <text evidence="5 6 7 9 10">Required, indirectly, for activation of ribonucleotide reductase through the degradation of the protein spd1, thereby supplying deoxyribonucleotides for DNA replication and repair. Also has a role as a scaffold for assembling ubiquitin ligases (PubMed:12695334). Component of the Clr4 methyltransferase complex (ClrC) which contributes to the establishment of heterochromatin by specifically methylating histone H3 to form H3K9me (PubMed:16024659, PubMed:16127433, PubMed:18345014). ClrC preferentially ubiquitylates H3K14 and ClrC-mediated H3 ubiquitination promotes clr4 methyltransferase activity for the methylation of H3K9 (PubMed:31468675). H3K9me represents a specific tag for epigenetic transcriptional repression by recruiting swi6/HP1 to methylated histones which leads to transcriptional silencing within centromeric heterochromatin, telomeric regions and at the silent mating-type loci (PubMed:16024659).</text>
</comment>
<comment type="pathway">
    <text>Protein modification; protein ubiquitination.</text>
</comment>
<comment type="subunit">
    <text evidence="6 7">Component of the Clr4 methyltransferase complex (ClrC) composed of at least clr4, rik1, pcu4, rbx1, raf1 and raf2. The cullin pcu4, rik1, raf1, raf2 and the ring-box protein rbx1 are components of an E3 ubiquitin ligase, whose activity is essential for heterochromatin assembly.</text>
</comment>
<comment type="interaction">
    <interactant intactId="EBI-904890">
        <id>O14122</id>
    </interactant>
    <interactant intactId="EBI-354657">
        <id>O60016</id>
        <label>clr4</label>
    </interactant>
    <organismsDiffer>false</organismsDiffer>
    <experiments>3</experiments>
</comment>
<comment type="interaction">
    <interactant intactId="EBI-904890">
        <id>O14122</id>
    </interactant>
    <interactant intactId="EBI-1111936">
        <id>Q10426</id>
        <label>rik1</label>
    </interactant>
    <organismsDiffer>false</organismsDiffer>
    <experiments>3</experiments>
</comment>
<comment type="subcellular location">
    <subcellularLocation>
        <location evidence="8">Cytoplasm</location>
    </subcellularLocation>
    <subcellularLocation>
        <location evidence="8 9">Nucleus</location>
    </subcellularLocation>
    <subcellularLocation>
        <location evidence="9">Chromosome</location>
    </subcellularLocation>
</comment>
<comment type="PTM">
    <text evidence="1">Neddylated; enhancing the ubiquitin-ligase activity.</text>
</comment>
<comment type="similarity">
    <text evidence="4">Belongs to the cullin family.</text>
</comment>
<feature type="chain" id="PRO_0000119810" description="Cullin-4">
    <location>
        <begin position="1"/>
        <end position="734"/>
    </location>
</feature>
<feature type="domain" description="Cullin neddylation" evidence="3">
    <location>
        <begin position="666"/>
        <end position="728"/>
    </location>
</feature>
<feature type="cross-link" description="Glycyl lysine isopeptide (Lys-Gly) (interchain with G-Cter in NEDD8)" evidence="2">
    <location>
        <position position="680"/>
    </location>
</feature>
<feature type="mutagenesis site" description="Increase in H3-K4 methylation within heterochromatin." evidence="6">
    <original>K</original>
    <variation>R</variation>
    <location>
        <position position="680"/>
    </location>
</feature>
<keyword id="KW-0156">Chromatin regulator</keyword>
<keyword id="KW-0158">Chromosome</keyword>
<keyword id="KW-0963">Cytoplasm</keyword>
<keyword id="KW-0903">Direct protein sequencing</keyword>
<keyword id="KW-1017">Isopeptide bond</keyword>
<keyword id="KW-0539">Nucleus</keyword>
<keyword id="KW-1185">Reference proteome</keyword>
<keyword id="KW-0804">Transcription</keyword>
<keyword id="KW-0805">Transcription regulation</keyword>
<keyword id="KW-0832">Ubl conjugation</keyword>
<gene>
    <name type="primary">pcu4</name>
    <name type="synonym">cul4</name>
    <name type="ORF">SPAC3A11.08</name>
</gene>
<protein>
    <recommendedName>
        <fullName>Cullin-4</fullName>
        <shortName>Cul-4</shortName>
    </recommendedName>
</protein>
<accession>O14122</accession>
<accession>Q9USB6</accession>
<sequence length="734" mass="85330">MPPEAKRIVVKGFDPRKSRQRQETYYVTMIDRLNMALQVVMAGLGLKTGYQELYSGVENLTRADQASRCFNILQHHMSSGIQLLKDSAESFIQLEGTETDTNACTVVVGCWNKWLERVEIVQNIFYYMDKTFLSHHPDYPTIEELSLSLFREKLMAVKNIQIPFLNSLLQSFENLHSSKSTDHAYLQDAMLMLHRTEMYSSVFVPMYLVMLSRFYDTESSQKIQELPLEEYLEYAMSSLEREDAYVEKFDIVRDKKSIRETVQRCLITSHLDTLTKGISQFIEKRDAHSCKLLYALLQFNHETEYLIQPWSDCLVDVGFKLVNDESKDDTLVQELLSFHKFLQVVVDESFLHDETLSYAMRKAFETFINGAKGSQREAPARLIAKYIDYLLRVGEQASGGKPLKEVFSEILDLFRYIASKDIFEAYYKLDIAKRLLLNKSASAQNELMLLDMLKKTCGSQFTHSLEGMFRDVNISKEFTSSFRHSKAAHNLHRDLYVNVLSQAYWPSYPESHIRLPDDMQQDLDCFEKFYLSKQVGKKISWYASLGHCIVKARFPLGNKELSISLFQACVLLQFNNCLGGEGISYQDLKKSTELSDIDLTRTLQSLSCARIRPLVMVPKSKKPSPDTMFYVNEKFTDKLYRVKINQIYLKEERQENSDVQEQVVRDRQFELQASIVRVMKQKEKMKHDDLVQYVINNVKDRGIPLVSDVKTAIEKLLEKEYLEREDNDIYTYVT</sequence>
<name>CUL4_SCHPO</name>
<dbReference type="EMBL" id="CU329670">
    <property type="protein sequence ID" value="CAB16383.1"/>
    <property type="molecule type" value="Genomic_DNA"/>
</dbReference>
<dbReference type="EMBL" id="AB017029">
    <property type="protein sequence ID" value="BAA32520.1"/>
    <property type="molecule type" value="Genomic_DNA"/>
</dbReference>
<dbReference type="EMBL" id="AB027893">
    <property type="protein sequence ID" value="BAA87197.1"/>
    <property type="molecule type" value="Genomic_DNA"/>
</dbReference>
<dbReference type="PIR" id="T43408">
    <property type="entry name" value="T43408"/>
</dbReference>
<dbReference type="RefSeq" id="NP_594195.1">
    <property type="nucleotide sequence ID" value="NM_001019619.2"/>
</dbReference>
<dbReference type="SMR" id="O14122"/>
<dbReference type="BioGRID" id="279548">
    <property type="interactions" value="15"/>
</dbReference>
<dbReference type="ComplexPortal" id="CPX-9241">
    <property type="entry name" value="CLR4 E3 ubiquitin ligase/methyltransferase complex"/>
</dbReference>
<dbReference type="FunCoup" id="O14122">
    <property type="interactions" value="659"/>
</dbReference>
<dbReference type="IntAct" id="O14122">
    <property type="interactions" value="7"/>
</dbReference>
<dbReference type="STRING" id="284812.O14122"/>
<dbReference type="iPTMnet" id="O14122"/>
<dbReference type="PaxDb" id="4896-SPAC3A11.08.1"/>
<dbReference type="EnsemblFungi" id="SPAC3A11.08.1">
    <property type="protein sequence ID" value="SPAC3A11.08.1:pep"/>
    <property type="gene ID" value="SPAC3A11.08"/>
</dbReference>
<dbReference type="GeneID" id="2543116"/>
<dbReference type="KEGG" id="spo:2543116"/>
<dbReference type="PomBase" id="SPAC3A11.08">
    <property type="gene designation" value="pcu4"/>
</dbReference>
<dbReference type="VEuPathDB" id="FungiDB:SPAC3A11.08"/>
<dbReference type="eggNOG" id="KOG2167">
    <property type="taxonomic scope" value="Eukaryota"/>
</dbReference>
<dbReference type="HOGENOM" id="CLU_004747_7_0_1"/>
<dbReference type="InParanoid" id="O14122"/>
<dbReference type="OMA" id="NYQEQTW"/>
<dbReference type="PhylomeDB" id="O14122"/>
<dbReference type="Reactome" id="R-SPO-110314">
    <property type="pathway name" value="Recognition of DNA damage by PCNA-containing replication complex"/>
</dbReference>
<dbReference type="Reactome" id="R-SPO-5696395">
    <property type="pathway name" value="Formation of Incision Complex in GG-NER"/>
</dbReference>
<dbReference type="Reactome" id="R-SPO-5696400">
    <property type="pathway name" value="Dual Incision in GG-NER"/>
</dbReference>
<dbReference type="Reactome" id="R-SPO-6781823">
    <property type="pathway name" value="Formation of TC-NER Pre-Incision Complex"/>
</dbReference>
<dbReference type="Reactome" id="R-SPO-6782135">
    <property type="pathway name" value="Dual incision in TC-NER"/>
</dbReference>
<dbReference type="Reactome" id="R-SPO-6782210">
    <property type="pathway name" value="Gap-filling DNA repair synthesis and ligation in TC-NER"/>
</dbReference>
<dbReference type="Reactome" id="R-SPO-8951664">
    <property type="pathway name" value="Neddylation"/>
</dbReference>
<dbReference type="UniPathway" id="UPA00143"/>
<dbReference type="PRO" id="PR:O14122"/>
<dbReference type="Proteomes" id="UP000002485">
    <property type="component" value="Chromosome I"/>
</dbReference>
<dbReference type="GO" id="GO:0043494">
    <property type="term" value="C:CLRC complex"/>
    <property type="evidence" value="ECO:0000314"/>
    <property type="project" value="PomBase"/>
</dbReference>
<dbReference type="GO" id="GO:0080008">
    <property type="term" value="C:Cul4-RING E3 ubiquitin ligase complex"/>
    <property type="evidence" value="ECO:0000269"/>
    <property type="project" value="PomBase"/>
</dbReference>
<dbReference type="GO" id="GO:0005829">
    <property type="term" value="C:cytosol"/>
    <property type="evidence" value="ECO:0007005"/>
    <property type="project" value="PomBase"/>
</dbReference>
<dbReference type="GO" id="GO:0031934">
    <property type="term" value="C:mating-type region heterochromatin"/>
    <property type="evidence" value="ECO:0000314"/>
    <property type="project" value="PomBase"/>
</dbReference>
<dbReference type="GO" id="GO:0005634">
    <property type="term" value="C:nucleus"/>
    <property type="evidence" value="ECO:0007005"/>
    <property type="project" value="PomBase"/>
</dbReference>
<dbReference type="GO" id="GO:0005721">
    <property type="term" value="C:pericentric heterochromatin"/>
    <property type="evidence" value="ECO:0000314"/>
    <property type="project" value="PomBase"/>
</dbReference>
<dbReference type="GO" id="GO:0140720">
    <property type="term" value="C:subtelomeric heterochromatin"/>
    <property type="evidence" value="ECO:0000314"/>
    <property type="project" value="PomBase"/>
</dbReference>
<dbReference type="GO" id="GO:0031625">
    <property type="term" value="F:ubiquitin protein ligase binding"/>
    <property type="evidence" value="ECO:0000318"/>
    <property type="project" value="GO_Central"/>
</dbReference>
<dbReference type="GO" id="GO:0006974">
    <property type="term" value="P:DNA damage response"/>
    <property type="evidence" value="ECO:0000318"/>
    <property type="project" value="GO_Central"/>
</dbReference>
<dbReference type="GO" id="GO:0033621">
    <property type="term" value="P:nuclear mRNA surveillance of meiosis-specific transcripts"/>
    <property type="evidence" value="ECO:0000316"/>
    <property type="project" value="PomBase"/>
</dbReference>
<dbReference type="GO" id="GO:0031508">
    <property type="term" value="P:pericentric heterochromatin formation"/>
    <property type="evidence" value="ECO:0000315"/>
    <property type="project" value="PomBase"/>
</dbReference>
<dbReference type="GO" id="GO:0016567">
    <property type="term" value="P:protein ubiquitination"/>
    <property type="evidence" value="ECO:0000318"/>
    <property type="project" value="GO_Central"/>
</dbReference>
<dbReference type="GO" id="GO:0030466">
    <property type="term" value="P:silent mating-type cassette heterochromatin formation"/>
    <property type="evidence" value="ECO:0000315"/>
    <property type="project" value="PomBase"/>
</dbReference>
<dbReference type="GO" id="GO:0140727">
    <property type="term" value="P:siRNA-mediated pericentric heterochromatin formation"/>
    <property type="evidence" value="ECO:0000315"/>
    <property type="project" value="PomBase"/>
</dbReference>
<dbReference type="GO" id="GO:0031509">
    <property type="term" value="P:subtelomeric heterochromatin formation"/>
    <property type="evidence" value="ECO:0000315"/>
    <property type="project" value="PomBase"/>
</dbReference>
<dbReference type="GO" id="GO:0006283">
    <property type="term" value="P:transcription-coupled nucleotide-excision repair"/>
    <property type="evidence" value="ECO:0000315"/>
    <property type="project" value="PomBase"/>
</dbReference>
<dbReference type="GO" id="GO:0006511">
    <property type="term" value="P:ubiquitin-dependent protein catabolic process"/>
    <property type="evidence" value="ECO:0007669"/>
    <property type="project" value="InterPro"/>
</dbReference>
<dbReference type="FunFam" id="1.10.10.10:FF:000014">
    <property type="entry name" value="Cullin 1"/>
    <property type="match status" value="1"/>
</dbReference>
<dbReference type="FunFam" id="1.20.1310.10:FF:000055">
    <property type="entry name" value="Cullin family protein"/>
    <property type="match status" value="1"/>
</dbReference>
<dbReference type="Gene3D" id="1.20.1310.10">
    <property type="entry name" value="Cullin Repeats"/>
    <property type="match status" value="4"/>
</dbReference>
<dbReference type="Gene3D" id="3.30.230.130">
    <property type="entry name" value="Cullin, Chain C, Domain 2"/>
    <property type="match status" value="1"/>
</dbReference>
<dbReference type="Gene3D" id="1.10.10.10">
    <property type="entry name" value="Winged helix-like DNA-binding domain superfamily/Winged helix DNA-binding domain"/>
    <property type="match status" value="1"/>
</dbReference>
<dbReference type="InterPro" id="IPR045093">
    <property type="entry name" value="Cullin"/>
</dbReference>
<dbReference type="InterPro" id="IPR016157">
    <property type="entry name" value="Cullin_CS"/>
</dbReference>
<dbReference type="InterPro" id="IPR016158">
    <property type="entry name" value="Cullin_homology"/>
</dbReference>
<dbReference type="InterPro" id="IPR036317">
    <property type="entry name" value="Cullin_homology_sf"/>
</dbReference>
<dbReference type="InterPro" id="IPR001373">
    <property type="entry name" value="Cullin_N"/>
</dbReference>
<dbReference type="InterPro" id="IPR019559">
    <property type="entry name" value="Cullin_neddylation_domain"/>
</dbReference>
<dbReference type="InterPro" id="IPR016159">
    <property type="entry name" value="Cullin_repeat-like_dom_sf"/>
</dbReference>
<dbReference type="InterPro" id="IPR036388">
    <property type="entry name" value="WH-like_DNA-bd_sf"/>
</dbReference>
<dbReference type="InterPro" id="IPR036390">
    <property type="entry name" value="WH_DNA-bd_sf"/>
</dbReference>
<dbReference type="PANTHER" id="PTHR11932">
    <property type="entry name" value="CULLIN"/>
    <property type="match status" value="1"/>
</dbReference>
<dbReference type="Pfam" id="PF00888">
    <property type="entry name" value="Cullin"/>
    <property type="match status" value="1"/>
</dbReference>
<dbReference type="Pfam" id="PF10557">
    <property type="entry name" value="Cullin_Nedd8"/>
    <property type="match status" value="1"/>
</dbReference>
<dbReference type="SMART" id="SM00182">
    <property type="entry name" value="CULLIN"/>
    <property type="match status" value="1"/>
</dbReference>
<dbReference type="SMART" id="SM00884">
    <property type="entry name" value="Cullin_Nedd8"/>
    <property type="match status" value="1"/>
</dbReference>
<dbReference type="SUPFAM" id="SSF75632">
    <property type="entry name" value="Cullin homology domain"/>
    <property type="match status" value="1"/>
</dbReference>
<dbReference type="SUPFAM" id="SSF74788">
    <property type="entry name" value="Cullin repeat-like"/>
    <property type="match status" value="1"/>
</dbReference>
<dbReference type="SUPFAM" id="SSF46785">
    <property type="entry name" value="Winged helix' DNA-binding domain"/>
    <property type="match status" value="1"/>
</dbReference>
<dbReference type="PROSITE" id="PS01256">
    <property type="entry name" value="CULLIN_1"/>
    <property type="match status" value="1"/>
</dbReference>
<dbReference type="PROSITE" id="PS50069">
    <property type="entry name" value="CULLIN_2"/>
    <property type="match status" value="1"/>
</dbReference>
<reference key="1">
    <citation type="journal article" date="1998" name="Genes Cells">
        <title>Two F-box/WD-repeat proteins Pop1 and Pop2 form hetero- and homo-complexes together with cullin-1 in fission yeast SCF (Skip-cullin-1-F-box) ubiquitin ligase.</title>
        <authorList>
            <person name="Kominami K."/>
            <person name="Ochotorena I."/>
            <person name="Toda T."/>
        </authorList>
    </citation>
    <scope>NUCLEOTIDE SEQUENCE [GENOMIC DNA]</scope>
    <source>
        <strain>972 / ATCC 24843</strain>
    </source>
</reference>
<reference key="2">
    <citation type="journal article" date="2002" name="Nature">
        <title>The genome sequence of Schizosaccharomyces pombe.</title>
        <authorList>
            <person name="Wood V."/>
            <person name="Gwilliam R."/>
            <person name="Rajandream M.A."/>
            <person name="Lyne M.H."/>
            <person name="Lyne R."/>
            <person name="Stewart A."/>
            <person name="Sgouros J.G."/>
            <person name="Peat N."/>
            <person name="Hayles J."/>
            <person name="Baker S.G."/>
            <person name="Basham D."/>
            <person name="Bowman S."/>
            <person name="Brooks K."/>
            <person name="Brown D."/>
            <person name="Brown S."/>
            <person name="Chillingworth T."/>
            <person name="Churcher C.M."/>
            <person name="Collins M."/>
            <person name="Connor R."/>
            <person name="Cronin A."/>
            <person name="Davis P."/>
            <person name="Feltwell T."/>
            <person name="Fraser A."/>
            <person name="Gentles S."/>
            <person name="Goble A."/>
            <person name="Hamlin N."/>
            <person name="Harris D.E."/>
            <person name="Hidalgo J."/>
            <person name="Hodgson G."/>
            <person name="Holroyd S."/>
            <person name="Hornsby T."/>
            <person name="Howarth S."/>
            <person name="Huckle E.J."/>
            <person name="Hunt S."/>
            <person name="Jagels K."/>
            <person name="James K.D."/>
            <person name="Jones L."/>
            <person name="Jones M."/>
            <person name="Leather S."/>
            <person name="McDonald S."/>
            <person name="McLean J."/>
            <person name="Mooney P."/>
            <person name="Moule S."/>
            <person name="Mungall K.L."/>
            <person name="Murphy L.D."/>
            <person name="Niblett D."/>
            <person name="Odell C."/>
            <person name="Oliver K."/>
            <person name="O'Neil S."/>
            <person name="Pearson D."/>
            <person name="Quail M.A."/>
            <person name="Rabbinowitsch E."/>
            <person name="Rutherford K.M."/>
            <person name="Rutter S."/>
            <person name="Saunders D."/>
            <person name="Seeger K."/>
            <person name="Sharp S."/>
            <person name="Skelton J."/>
            <person name="Simmonds M.N."/>
            <person name="Squares R."/>
            <person name="Squares S."/>
            <person name="Stevens K."/>
            <person name="Taylor K."/>
            <person name="Taylor R.G."/>
            <person name="Tivey A."/>
            <person name="Walsh S.V."/>
            <person name="Warren T."/>
            <person name="Whitehead S."/>
            <person name="Woodward J.R."/>
            <person name="Volckaert G."/>
            <person name="Aert R."/>
            <person name="Robben J."/>
            <person name="Grymonprez B."/>
            <person name="Weltjens I."/>
            <person name="Vanstreels E."/>
            <person name="Rieger M."/>
            <person name="Schaefer M."/>
            <person name="Mueller-Auer S."/>
            <person name="Gabel C."/>
            <person name="Fuchs M."/>
            <person name="Duesterhoeft A."/>
            <person name="Fritzc C."/>
            <person name="Holzer E."/>
            <person name="Moestl D."/>
            <person name="Hilbert H."/>
            <person name="Borzym K."/>
            <person name="Langer I."/>
            <person name="Beck A."/>
            <person name="Lehrach H."/>
            <person name="Reinhardt R."/>
            <person name="Pohl T.M."/>
            <person name="Eger P."/>
            <person name="Zimmermann W."/>
            <person name="Wedler H."/>
            <person name="Wambutt R."/>
            <person name="Purnelle B."/>
            <person name="Goffeau A."/>
            <person name="Cadieu E."/>
            <person name="Dreano S."/>
            <person name="Gloux S."/>
            <person name="Lelaure V."/>
            <person name="Mottier S."/>
            <person name="Galibert F."/>
            <person name="Aves S.J."/>
            <person name="Xiang Z."/>
            <person name="Hunt C."/>
            <person name="Moore K."/>
            <person name="Hurst S.M."/>
            <person name="Lucas M."/>
            <person name="Rochet M."/>
            <person name="Gaillardin C."/>
            <person name="Tallada V.A."/>
            <person name="Garzon A."/>
            <person name="Thode G."/>
            <person name="Daga R.R."/>
            <person name="Cruzado L."/>
            <person name="Jimenez J."/>
            <person name="Sanchez M."/>
            <person name="del Rey F."/>
            <person name="Benito J."/>
            <person name="Dominguez A."/>
            <person name="Revuelta J.L."/>
            <person name="Moreno S."/>
            <person name="Armstrong J."/>
            <person name="Forsburg S.L."/>
            <person name="Cerutti L."/>
            <person name="Lowe T."/>
            <person name="McCombie W.R."/>
            <person name="Paulsen I."/>
            <person name="Potashkin J."/>
            <person name="Shpakovski G.V."/>
            <person name="Ussery D."/>
            <person name="Barrell B.G."/>
            <person name="Nurse P."/>
        </authorList>
    </citation>
    <scope>NUCLEOTIDE SEQUENCE [LARGE SCALE GENOMIC DNA]</scope>
    <source>
        <strain>972 / ATCC 24843</strain>
    </source>
</reference>
<reference key="3">
    <citation type="journal article" date="2005" name="Genes Dev.">
        <title>A Rik1-associated, cullin-dependent E3 ubiquitin ligase is essential for heterochromatin formation.</title>
        <authorList>
            <person name="Horn P.J."/>
            <person name="Bastie J.-N."/>
            <person name="Peterson C.L."/>
        </authorList>
    </citation>
    <scope>PARTIAL PROTEIN SEQUENCE</scope>
    <scope>FUNCTION</scope>
    <scope>IDENTIFICATION IN THE RIK1-ASSOCIATED E3 UBIQUITIN LIGASE COMPLEX</scope>
    <scope>MUTAGENESIS OF LYS-680</scope>
</reference>
<reference key="4">
    <citation type="journal article" date="2005" name="Nat. Cell Biol.">
        <title>Ubiquitin ligase component Cul4 associates with Clr4 histone methyltransferase to assemble heterochromatin.</title>
        <authorList>
            <person name="Jia S."/>
            <person name="Kobayashi R."/>
            <person name="Grewal S.I.S."/>
        </authorList>
    </citation>
    <scope>PROTEIN SEQUENCE OF 180-195; 223-241; 321-340 AND 591-601</scope>
    <scope>FUNCTION</scope>
    <scope>INTERACTION WITH CLR4 AND RIK1</scope>
</reference>
<reference key="5">
    <citation type="journal article" date="2000" name="Genes Cells">
        <title>Large-scale screening of intracellular protein localization in living fission yeast cells by the use of a GFP-fusion genomic DNA library.</title>
        <authorList>
            <person name="Ding D.-Q."/>
            <person name="Tomita Y."/>
            <person name="Yamamoto A."/>
            <person name="Chikashige Y."/>
            <person name="Haraguchi T."/>
            <person name="Hiraoka Y."/>
        </authorList>
    </citation>
    <scope>NUCLEOTIDE SEQUENCE [LARGE SCALE GENOMIC DNA] OF 186-412</scope>
    <scope>SUBCELLULAR LOCATION</scope>
    <source>
        <strain>ATCC 38364 / 968</strain>
    </source>
</reference>
<reference key="6">
    <citation type="journal article" date="2003" name="Genes Dev.">
        <title>Cop9/signalosome subunits and Pcu4 regulate ribonucleotide reductase by both checkpoint-dependent and -independent mechanisms.</title>
        <authorList>
            <person name="Liu C."/>
            <person name="Powell K.A."/>
            <person name="Mundt K."/>
            <person name="Wu L."/>
            <person name="Carr A.M."/>
            <person name="Caspari T."/>
        </authorList>
    </citation>
    <scope>FUNCTION</scope>
</reference>
<reference key="7">
    <citation type="journal article" date="2005" name="Genetics">
        <title>The Clr7 and Clr8 directionality factors and the Pcu4 cullin mediate heterochromatin formation in the fission yeast Schizosaccharomyces pombe.</title>
        <authorList>
            <person name="Thon G."/>
            <person name="Hansen K.R."/>
            <person name="Altes S.P."/>
            <person name="Sidhu D."/>
            <person name="Singh G."/>
            <person name="Verhein-Hansen J."/>
            <person name="Bonaduce M.J."/>
            <person name="Klar A.J."/>
        </authorList>
    </citation>
    <scope>INTERACTION WITH RAF2</scope>
</reference>
<reference key="8">
    <citation type="journal article" date="2006" name="Nat. Biotechnol.">
        <title>ORFeome cloning and global analysis of protein localization in the fission yeast Schizosaccharomyces pombe.</title>
        <authorList>
            <person name="Matsuyama A."/>
            <person name="Arai R."/>
            <person name="Yashiroda Y."/>
            <person name="Shirai A."/>
            <person name="Kamata A."/>
            <person name="Sekido S."/>
            <person name="Kobayashi Y."/>
            <person name="Hashimoto A."/>
            <person name="Hamamoto M."/>
            <person name="Hiraoka Y."/>
            <person name="Horinouchi S."/>
            <person name="Yoshida M."/>
        </authorList>
    </citation>
    <scope>SUBCELLULAR LOCATION [LARGE SCALE ANALYSIS]</scope>
</reference>
<reference key="9">
    <citation type="journal article" date="2008" name="Nat. Struct. Mol. Biol.">
        <title>Roles of the Clr4 methyltransferase complex in nucleation, spreading and maintenance of heterochromatin.</title>
        <authorList>
            <person name="Zhang K."/>
            <person name="Mosch K."/>
            <person name="Fischle W."/>
            <person name="Grewal S.I."/>
        </authorList>
    </citation>
    <scope>FUNCTION</scope>
    <scope>SUBCELLULAR LOCATION</scope>
</reference>
<reference key="10">
    <citation type="journal article" date="2019" name="EMBO Rep.">
        <title>H3K14 ubiquitylation promotes H3K9 methylation for heterochromatin assembly.</title>
        <authorList>
            <person name="Oya E."/>
            <person name="Nakagawa R."/>
            <person name="Yoshimura Y."/>
            <person name="Tanaka M."/>
            <person name="Nishibuchi G."/>
            <person name="Machida S."/>
            <person name="Shirai A."/>
            <person name="Ekwall K."/>
            <person name="Kurumizaka H."/>
            <person name="Tagami H."/>
            <person name="Nakayama J.I."/>
        </authorList>
    </citation>
    <scope>FUNCTION</scope>
</reference>
<evidence type="ECO:0000250" key="1">
    <source>
        <dbReference type="UniProtKB" id="P47050"/>
    </source>
</evidence>
<evidence type="ECO:0000250" key="2">
    <source>
        <dbReference type="UniProtKB" id="Q13616"/>
    </source>
</evidence>
<evidence type="ECO:0000255" key="3"/>
<evidence type="ECO:0000255" key="4">
    <source>
        <dbReference type="PROSITE-ProRule" id="PRU00330"/>
    </source>
</evidence>
<evidence type="ECO:0000269" key="5">
    <source>
    </source>
</evidence>
<evidence type="ECO:0000269" key="6">
    <source>
    </source>
</evidence>
<evidence type="ECO:0000269" key="7">
    <source>
    </source>
</evidence>
<evidence type="ECO:0000269" key="8">
    <source>
    </source>
</evidence>
<evidence type="ECO:0000269" key="9">
    <source>
    </source>
</evidence>
<evidence type="ECO:0000269" key="10">
    <source>
    </source>
</evidence>
<proteinExistence type="evidence at protein level"/>